<dbReference type="EMBL" id="CP000644">
    <property type="protein sequence ID" value="ABO92197.1"/>
    <property type="molecule type" value="Genomic_DNA"/>
</dbReference>
<dbReference type="RefSeq" id="WP_005320633.1">
    <property type="nucleotide sequence ID" value="NC_009348.1"/>
</dbReference>
<dbReference type="SMR" id="A4STH5"/>
<dbReference type="STRING" id="29491.GCA_000820065_02823"/>
<dbReference type="KEGG" id="asa:ASA_4273"/>
<dbReference type="eggNOG" id="COG3604">
    <property type="taxonomic scope" value="Bacteria"/>
</dbReference>
<dbReference type="HOGENOM" id="CLU_000445_125_2_6"/>
<dbReference type="UniPathway" id="UPA00638"/>
<dbReference type="Proteomes" id="UP000000225">
    <property type="component" value="Chromosome"/>
</dbReference>
<dbReference type="GO" id="GO:0005524">
    <property type="term" value="F:ATP binding"/>
    <property type="evidence" value="ECO:0007669"/>
    <property type="project" value="UniProtKB-UniRule"/>
</dbReference>
<dbReference type="GO" id="GO:0016887">
    <property type="term" value="F:ATP hydrolysis activity"/>
    <property type="evidence" value="ECO:0007669"/>
    <property type="project" value="InterPro"/>
</dbReference>
<dbReference type="GO" id="GO:0003677">
    <property type="term" value="F:DNA binding"/>
    <property type="evidence" value="ECO:0007669"/>
    <property type="project" value="UniProtKB-KW"/>
</dbReference>
<dbReference type="GO" id="GO:0003700">
    <property type="term" value="F:DNA-binding transcription factor activity"/>
    <property type="evidence" value="ECO:0007669"/>
    <property type="project" value="UniProtKB-UniRule"/>
</dbReference>
<dbReference type="GO" id="GO:0000160">
    <property type="term" value="P:phosphorelay signal transduction system"/>
    <property type="evidence" value="ECO:0007669"/>
    <property type="project" value="UniProtKB-UniRule"/>
</dbReference>
<dbReference type="CDD" id="cd00009">
    <property type="entry name" value="AAA"/>
    <property type="match status" value="1"/>
</dbReference>
<dbReference type="FunFam" id="3.40.50.300:FF:000006">
    <property type="entry name" value="DNA-binding transcriptional regulator NtrC"/>
    <property type="match status" value="1"/>
</dbReference>
<dbReference type="Gene3D" id="1.10.8.60">
    <property type="match status" value="1"/>
</dbReference>
<dbReference type="Gene3D" id="3.30.450.40">
    <property type="match status" value="1"/>
</dbReference>
<dbReference type="Gene3D" id="1.10.10.60">
    <property type="entry name" value="Homeodomain-like"/>
    <property type="match status" value="1"/>
</dbReference>
<dbReference type="Gene3D" id="3.40.50.300">
    <property type="entry name" value="P-loop containing nucleotide triphosphate hydrolases"/>
    <property type="match status" value="1"/>
</dbReference>
<dbReference type="HAMAP" id="MF_01314">
    <property type="entry name" value="NorR"/>
    <property type="match status" value="1"/>
</dbReference>
<dbReference type="InterPro" id="IPR003593">
    <property type="entry name" value="AAA+_ATPase"/>
</dbReference>
<dbReference type="InterPro" id="IPR003018">
    <property type="entry name" value="GAF"/>
</dbReference>
<dbReference type="InterPro" id="IPR029016">
    <property type="entry name" value="GAF-like_dom_sf"/>
</dbReference>
<dbReference type="InterPro" id="IPR009057">
    <property type="entry name" value="Homeodomain-like_sf"/>
</dbReference>
<dbReference type="InterPro" id="IPR023944">
    <property type="entry name" value="NorR"/>
</dbReference>
<dbReference type="InterPro" id="IPR027417">
    <property type="entry name" value="P-loop_NTPase"/>
</dbReference>
<dbReference type="InterPro" id="IPR002078">
    <property type="entry name" value="Sigma_54_int"/>
</dbReference>
<dbReference type="InterPro" id="IPR025662">
    <property type="entry name" value="Sigma_54_int_dom_ATP-bd_1"/>
</dbReference>
<dbReference type="InterPro" id="IPR025943">
    <property type="entry name" value="Sigma_54_int_dom_ATP-bd_2"/>
</dbReference>
<dbReference type="InterPro" id="IPR025944">
    <property type="entry name" value="Sigma_54_int_dom_CS"/>
</dbReference>
<dbReference type="NCBIfam" id="NF003451">
    <property type="entry name" value="PRK05022.1"/>
    <property type="match status" value="1"/>
</dbReference>
<dbReference type="PANTHER" id="PTHR32071:SF35">
    <property type="entry name" value="ANAEROBIC NITRIC OXIDE REDUCTASE TRANSCRIPTION REGULATOR NORR"/>
    <property type="match status" value="1"/>
</dbReference>
<dbReference type="PANTHER" id="PTHR32071">
    <property type="entry name" value="TRANSCRIPTIONAL REGULATORY PROTEIN"/>
    <property type="match status" value="1"/>
</dbReference>
<dbReference type="Pfam" id="PF01590">
    <property type="entry name" value="GAF"/>
    <property type="match status" value="1"/>
</dbReference>
<dbReference type="Pfam" id="PF00158">
    <property type="entry name" value="Sigma54_activat"/>
    <property type="match status" value="1"/>
</dbReference>
<dbReference type="SMART" id="SM00382">
    <property type="entry name" value="AAA"/>
    <property type="match status" value="1"/>
</dbReference>
<dbReference type="SMART" id="SM00065">
    <property type="entry name" value="GAF"/>
    <property type="match status" value="1"/>
</dbReference>
<dbReference type="SUPFAM" id="SSF55781">
    <property type="entry name" value="GAF domain-like"/>
    <property type="match status" value="1"/>
</dbReference>
<dbReference type="SUPFAM" id="SSF46689">
    <property type="entry name" value="Homeodomain-like"/>
    <property type="match status" value="1"/>
</dbReference>
<dbReference type="SUPFAM" id="SSF52540">
    <property type="entry name" value="P-loop containing nucleoside triphosphate hydrolases"/>
    <property type="match status" value="1"/>
</dbReference>
<dbReference type="PROSITE" id="PS00675">
    <property type="entry name" value="SIGMA54_INTERACT_1"/>
    <property type="match status" value="1"/>
</dbReference>
<dbReference type="PROSITE" id="PS00676">
    <property type="entry name" value="SIGMA54_INTERACT_2"/>
    <property type="match status" value="1"/>
</dbReference>
<dbReference type="PROSITE" id="PS00688">
    <property type="entry name" value="SIGMA54_INTERACT_3"/>
    <property type="match status" value="1"/>
</dbReference>
<dbReference type="PROSITE" id="PS50045">
    <property type="entry name" value="SIGMA54_INTERACT_4"/>
    <property type="match status" value="1"/>
</dbReference>
<protein>
    <recommendedName>
        <fullName evidence="1">Anaerobic nitric oxide reductase transcription regulator NorR</fullName>
    </recommendedName>
</protein>
<accession>A4STH5</accession>
<comment type="function">
    <text evidence="1">Required for the expression of anaerobic nitric oxide (NO) reductase, acts as a transcriptional activator for at least the norVW operon. Activation also requires sigma-54.</text>
</comment>
<comment type="pathway">
    <text evidence="1">Nitrogen metabolism; nitric oxide reduction.</text>
</comment>
<organism>
    <name type="scientific">Aeromonas salmonicida (strain A449)</name>
    <dbReference type="NCBI Taxonomy" id="382245"/>
    <lineage>
        <taxon>Bacteria</taxon>
        <taxon>Pseudomonadati</taxon>
        <taxon>Pseudomonadota</taxon>
        <taxon>Gammaproteobacteria</taxon>
        <taxon>Aeromonadales</taxon>
        <taxon>Aeromonadaceae</taxon>
        <taxon>Aeromonas</taxon>
    </lineage>
</organism>
<evidence type="ECO:0000255" key="1">
    <source>
        <dbReference type="HAMAP-Rule" id="MF_01314"/>
    </source>
</evidence>
<proteinExistence type="inferred from homology"/>
<feature type="chain" id="PRO_0000305617" description="Anaerobic nitric oxide reductase transcription regulator NorR">
    <location>
        <begin position="1"/>
        <end position="509"/>
    </location>
</feature>
<feature type="domain" description="Sigma-54 factor interaction" evidence="1">
    <location>
        <begin position="186"/>
        <end position="415"/>
    </location>
</feature>
<feature type="DNA-binding region" description="H-T-H motif" evidence="1">
    <location>
        <begin position="484"/>
        <end position="503"/>
    </location>
</feature>
<feature type="binding site" evidence="1">
    <location>
        <begin position="214"/>
        <end position="221"/>
    </location>
    <ligand>
        <name>ATP</name>
        <dbReference type="ChEBI" id="CHEBI:30616"/>
    </ligand>
</feature>
<feature type="binding site" evidence="1">
    <location>
        <begin position="277"/>
        <end position="286"/>
    </location>
    <ligand>
        <name>ATP</name>
        <dbReference type="ChEBI" id="CHEBI:30616"/>
    </ligand>
</feature>
<feature type="modified residue" description="4-aspartylphosphate" evidence="1">
    <location>
        <position position="56"/>
    </location>
</feature>
<keyword id="KW-0067">ATP-binding</keyword>
<keyword id="KW-0238">DNA-binding</keyword>
<keyword id="KW-0547">Nucleotide-binding</keyword>
<keyword id="KW-0597">Phosphoprotein</keyword>
<keyword id="KW-0804">Transcription</keyword>
<keyword id="KW-0805">Transcription regulation</keyword>
<gene>
    <name evidence="1" type="primary">norR</name>
    <name type="ordered locus">ASA_4273</name>
</gene>
<reference key="1">
    <citation type="journal article" date="2008" name="BMC Genomics">
        <title>The genome of Aeromonas salmonicida subsp. salmonicida A449: insights into the evolution of a fish pathogen.</title>
        <authorList>
            <person name="Reith M.E."/>
            <person name="Singh R.K."/>
            <person name="Curtis B."/>
            <person name="Boyd J.M."/>
            <person name="Bouevitch A."/>
            <person name="Kimball J."/>
            <person name="Munholland J."/>
            <person name="Murphy C."/>
            <person name="Sarty D."/>
            <person name="Williams J."/>
            <person name="Nash J.H."/>
            <person name="Johnson S.C."/>
            <person name="Brown L.L."/>
        </authorList>
    </citation>
    <scope>NUCLEOTIDE SEQUENCE [LARGE SCALE GENOMIC DNA]</scope>
    <source>
        <strain>A449</strain>
    </source>
</reference>
<name>NORR_AERS4</name>
<sequence length="509" mass="55302">MISTDSLARIALDLQLGISHQDRFHRLIQSVRSLLHSDASALLRYEGGQFIPLAIDGLMQDVLGRRFALADHPRMEAIARAGDVVRFPADSNLPDPYDGLIPDHDDFRVHACVGLPLFSDQTLIGALTIDGMNPTQFDGISDEELRLVGALAAAALSNALLLERLARQSSEPLAPSTQNGPGRAEMIGRSPAMDRLRHEINVVASSELNVLILGETGVGKELIAKAVHQGSPRASAPLVYLNCAALPESVAESELFGHVKGAFTGAIHNRAGKFELADKGTLFLDEIGELSLSLQAKLLRVLQYGDLQRIGDDTPLKVNVRILAATNRDLKQAVVEGQFRSDLYHRLSVFPIHAPALRERPDDIPLLAGYFCERCRVSLGLERLRIEPRALQLLGSYDWPGNVRELEHAIHRAAVLARAEQGSQAPALECHHFNLAAAGAPSSSRIPVEQVAQQMTAGMGLRTATDAFQLQLIEQTLAAQHGNWAATARALEMDGGNLHRLARRLGLKP</sequence>